<evidence type="ECO:0000255" key="1">
    <source>
        <dbReference type="HAMAP-Rule" id="MF_00041"/>
    </source>
</evidence>
<feature type="chain" id="PRO_0000159522" description="Cysteine--tRNA ligase">
    <location>
        <begin position="1"/>
        <end position="463"/>
    </location>
</feature>
<feature type="short sequence motif" description="'HIGH' region">
    <location>
        <begin position="30"/>
        <end position="40"/>
    </location>
</feature>
<feature type="short sequence motif" description="'KMSKS' region">
    <location>
        <begin position="268"/>
        <end position="272"/>
    </location>
</feature>
<feature type="binding site" evidence="1">
    <location>
        <position position="28"/>
    </location>
    <ligand>
        <name>Zn(2+)</name>
        <dbReference type="ChEBI" id="CHEBI:29105"/>
    </ligand>
</feature>
<feature type="binding site" evidence="1">
    <location>
        <position position="211"/>
    </location>
    <ligand>
        <name>Zn(2+)</name>
        <dbReference type="ChEBI" id="CHEBI:29105"/>
    </ligand>
</feature>
<feature type="binding site" evidence="1">
    <location>
        <position position="236"/>
    </location>
    <ligand>
        <name>Zn(2+)</name>
        <dbReference type="ChEBI" id="CHEBI:29105"/>
    </ligand>
</feature>
<feature type="binding site" evidence="1">
    <location>
        <position position="240"/>
    </location>
    <ligand>
        <name>Zn(2+)</name>
        <dbReference type="ChEBI" id="CHEBI:29105"/>
    </ligand>
</feature>
<feature type="binding site" evidence="1">
    <location>
        <position position="271"/>
    </location>
    <ligand>
        <name>ATP</name>
        <dbReference type="ChEBI" id="CHEBI:30616"/>
    </ligand>
</feature>
<name>SYC_WIGBR</name>
<accession>Q8D2V9</accession>
<keyword id="KW-0030">Aminoacyl-tRNA synthetase</keyword>
<keyword id="KW-0067">ATP-binding</keyword>
<keyword id="KW-0963">Cytoplasm</keyword>
<keyword id="KW-0436">Ligase</keyword>
<keyword id="KW-0479">Metal-binding</keyword>
<keyword id="KW-0547">Nucleotide-binding</keyword>
<keyword id="KW-0648">Protein biosynthesis</keyword>
<keyword id="KW-1185">Reference proteome</keyword>
<keyword id="KW-0862">Zinc</keyword>
<organism>
    <name type="scientific">Wigglesworthia glossinidia brevipalpis</name>
    <dbReference type="NCBI Taxonomy" id="36870"/>
    <lineage>
        <taxon>Bacteria</taxon>
        <taxon>Pseudomonadati</taxon>
        <taxon>Pseudomonadota</taxon>
        <taxon>Gammaproteobacteria</taxon>
        <taxon>Enterobacterales</taxon>
        <taxon>Erwiniaceae</taxon>
        <taxon>Wigglesworthia</taxon>
    </lineage>
</organism>
<gene>
    <name evidence="1" type="primary">cysS</name>
    <name type="ordered locus">WIGBR2430</name>
</gene>
<protein>
    <recommendedName>
        <fullName evidence="1">Cysteine--tRNA ligase</fullName>
        <ecNumber evidence="1">6.1.1.16</ecNumber>
    </recommendedName>
    <alternativeName>
        <fullName evidence="1">Cysteinyl-tRNA synthetase</fullName>
        <shortName evidence="1">CysRS</shortName>
    </alternativeName>
</protein>
<proteinExistence type="inferred from homology"/>
<comment type="catalytic activity">
    <reaction evidence="1">
        <text>tRNA(Cys) + L-cysteine + ATP = L-cysteinyl-tRNA(Cys) + AMP + diphosphate</text>
        <dbReference type="Rhea" id="RHEA:17773"/>
        <dbReference type="Rhea" id="RHEA-COMP:9661"/>
        <dbReference type="Rhea" id="RHEA-COMP:9679"/>
        <dbReference type="ChEBI" id="CHEBI:30616"/>
        <dbReference type="ChEBI" id="CHEBI:33019"/>
        <dbReference type="ChEBI" id="CHEBI:35235"/>
        <dbReference type="ChEBI" id="CHEBI:78442"/>
        <dbReference type="ChEBI" id="CHEBI:78517"/>
        <dbReference type="ChEBI" id="CHEBI:456215"/>
        <dbReference type="EC" id="6.1.1.16"/>
    </reaction>
</comment>
<comment type="cofactor">
    <cofactor evidence="1">
        <name>Zn(2+)</name>
        <dbReference type="ChEBI" id="CHEBI:29105"/>
    </cofactor>
    <text evidence="1">Binds 1 zinc ion per subunit.</text>
</comment>
<comment type="subunit">
    <text evidence="1">Monomer.</text>
</comment>
<comment type="subcellular location">
    <subcellularLocation>
        <location evidence="1">Cytoplasm</location>
    </subcellularLocation>
</comment>
<comment type="similarity">
    <text evidence="1">Belongs to the class-I aminoacyl-tRNA synthetase family.</text>
</comment>
<dbReference type="EC" id="6.1.1.16" evidence="1"/>
<dbReference type="EMBL" id="BA000021">
    <property type="protein sequence ID" value="BAC24389.1"/>
    <property type="molecule type" value="Genomic_DNA"/>
</dbReference>
<dbReference type="SMR" id="Q8D2V9"/>
<dbReference type="STRING" id="36870.gene:10368736"/>
<dbReference type="KEGG" id="wbr:cysS"/>
<dbReference type="eggNOG" id="COG0215">
    <property type="taxonomic scope" value="Bacteria"/>
</dbReference>
<dbReference type="HOGENOM" id="CLU_013528_0_1_6"/>
<dbReference type="OrthoDB" id="9815130at2"/>
<dbReference type="Proteomes" id="UP000000562">
    <property type="component" value="Chromosome"/>
</dbReference>
<dbReference type="GO" id="GO:0005829">
    <property type="term" value="C:cytosol"/>
    <property type="evidence" value="ECO:0007669"/>
    <property type="project" value="TreeGrafter"/>
</dbReference>
<dbReference type="GO" id="GO:0005524">
    <property type="term" value="F:ATP binding"/>
    <property type="evidence" value="ECO:0007669"/>
    <property type="project" value="UniProtKB-UniRule"/>
</dbReference>
<dbReference type="GO" id="GO:0004817">
    <property type="term" value="F:cysteine-tRNA ligase activity"/>
    <property type="evidence" value="ECO:0007669"/>
    <property type="project" value="UniProtKB-UniRule"/>
</dbReference>
<dbReference type="GO" id="GO:0008270">
    <property type="term" value="F:zinc ion binding"/>
    <property type="evidence" value="ECO:0007669"/>
    <property type="project" value="UniProtKB-UniRule"/>
</dbReference>
<dbReference type="GO" id="GO:0006423">
    <property type="term" value="P:cysteinyl-tRNA aminoacylation"/>
    <property type="evidence" value="ECO:0007669"/>
    <property type="project" value="UniProtKB-UniRule"/>
</dbReference>
<dbReference type="CDD" id="cd07963">
    <property type="entry name" value="Anticodon_Ia_Cys"/>
    <property type="match status" value="1"/>
</dbReference>
<dbReference type="CDD" id="cd00672">
    <property type="entry name" value="CysRS_core"/>
    <property type="match status" value="1"/>
</dbReference>
<dbReference type="Gene3D" id="1.20.120.1910">
    <property type="entry name" value="Cysteine-tRNA ligase, C-terminal anti-codon recognition domain"/>
    <property type="match status" value="1"/>
</dbReference>
<dbReference type="Gene3D" id="3.40.50.620">
    <property type="entry name" value="HUPs"/>
    <property type="match status" value="1"/>
</dbReference>
<dbReference type="HAMAP" id="MF_00041">
    <property type="entry name" value="Cys_tRNA_synth"/>
    <property type="match status" value="1"/>
</dbReference>
<dbReference type="InterPro" id="IPR015803">
    <property type="entry name" value="Cys-tRNA-ligase"/>
</dbReference>
<dbReference type="InterPro" id="IPR015273">
    <property type="entry name" value="Cys-tRNA-synt_Ia_DALR"/>
</dbReference>
<dbReference type="InterPro" id="IPR024909">
    <property type="entry name" value="Cys-tRNA/MSH_ligase"/>
</dbReference>
<dbReference type="InterPro" id="IPR014729">
    <property type="entry name" value="Rossmann-like_a/b/a_fold"/>
</dbReference>
<dbReference type="InterPro" id="IPR032678">
    <property type="entry name" value="tRNA-synt_1_cat_dom"/>
</dbReference>
<dbReference type="InterPro" id="IPR009080">
    <property type="entry name" value="tRNAsynth_Ia_anticodon-bd"/>
</dbReference>
<dbReference type="NCBIfam" id="TIGR00435">
    <property type="entry name" value="cysS"/>
    <property type="match status" value="1"/>
</dbReference>
<dbReference type="PANTHER" id="PTHR10890:SF3">
    <property type="entry name" value="CYSTEINE--TRNA LIGASE, CYTOPLASMIC"/>
    <property type="match status" value="1"/>
</dbReference>
<dbReference type="PANTHER" id="PTHR10890">
    <property type="entry name" value="CYSTEINYL-TRNA SYNTHETASE"/>
    <property type="match status" value="1"/>
</dbReference>
<dbReference type="Pfam" id="PF09190">
    <property type="entry name" value="DALR_2"/>
    <property type="match status" value="1"/>
</dbReference>
<dbReference type="Pfam" id="PF01406">
    <property type="entry name" value="tRNA-synt_1e"/>
    <property type="match status" value="1"/>
</dbReference>
<dbReference type="PRINTS" id="PR00983">
    <property type="entry name" value="TRNASYNTHCYS"/>
</dbReference>
<dbReference type="SMART" id="SM00840">
    <property type="entry name" value="DALR_2"/>
    <property type="match status" value="1"/>
</dbReference>
<dbReference type="SUPFAM" id="SSF47323">
    <property type="entry name" value="Anticodon-binding domain of a subclass of class I aminoacyl-tRNA synthetases"/>
    <property type="match status" value="1"/>
</dbReference>
<dbReference type="SUPFAM" id="SSF52374">
    <property type="entry name" value="Nucleotidylyl transferase"/>
    <property type="match status" value="1"/>
</dbReference>
<reference key="1">
    <citation type="journal article" date="2002" name="Nat. Genet.">
        <title>Genome sequence of the endocellular obligate symbiont of tsetse flies, Wigglesworthia glossinidia.</title>
        <authorList>
            <person name="Akman L."/>
            <person name="Yamashita A."/>
            <person name="Watanabe H."/>
            <person name="Oshima K."/>
            <person name="Shiba T."/>
            <person name="Hattori M."/>
            <person name="Aksoy S."/>
        </authorList>
    </citation>
    <scope>NUCLEOTIDE SEQUENCE [LARGE SCALE GENOMIC DNA]</scope>
</reference>
<sequence length="463" mass="54647">MMKIFNTLKNKKEKFKPINSNIVNVYVCGITPYDLCHIGHARTLVFFDIMIKYFQYKGYRTNYIRNITDIDDKIINKAFHKKEKYNLLSDFMIKEMKYDLNSLNIMPPNNEPRVTNHISDILEMIKILLEKKHAYISKTGDVVFDISTYRDYGKLSKRFEEKKQLLNNKKNKINFKTKKEKDFVLWKMSKPNEPSWKSPWGHGRPGWHIECSAISDKTLGNIFDIHGGGSDLIFPHHENEIAQSKCANSKFNVNFWVHTGMVMFKKEKMSKSLGNSCLIREIVKKYDADTLKYFLTSSHYRSQITYSVDNMEKSKSAVKRLYRSLHNTNYFYNLPIKEKFTSKFIDAMNDDFNTPKAYSVLFSISRQINYFKNKNPEKANQLSTVLKNLSNIIGILNENPDSYLNNKLKFSKDKINKIKSIIKKRENYRKLKQWEKADEERKKLKYIGVCLEDTIQGTKWFKL</sequence>